<accession>B7J0H6</accession>
<proteinExistence type="inferred from homology"/>
<evidence type="ECO:0000255" key="1">
    <source>
        <dbReference type="HAMAP-Rule" id="MF_00473"/>
    </source>
</evidence>
<name>G6PI_BORBZ</name>
<keyword id="KW-0963">Cytoplasm</keyword>
<keyword id="KW-0312">Gluconeogenesis</keyword>
<keyword id="KW-0324">Glycolysis</keyword>
<keyword id="KW-0413">Isomerase</keyword>
<reference key="1">
    <citation type="journal article" date="2011" name="J. Bacteriol.">
        <title>Whole-genome sequences of thirteen isolates of Borrelia burgdorferi.</title>
        <authorList>
            <person name="Schutzer S.E."/>
            <person name="Fraser-Liggett C.M."/>
            <person name="Casjens S.R."/>
            <person name="Qiu W.G."/>
            <person name="Dunn J.J."/>
            <person name="Mongodin E.F."/>
            <person name="Luft B.J."/>
        </authorList>
    </citation>
    <scope>NUCLEOTIDE SEQUENCE [LARGE SCALE GENOMIC DNA]</scope>
    <source>
        <strain>ZS7</strain>
    </source>
</reference>
<sequence>MLNYKNLNELENFKILEGIAPEVLKTALTGKRIKEYDITIEGDSVHYNYASKQINETHLKIFQNLSDEANLIEKYKEVLDGEKINISENRKVLHHLTRGQIGKDVIEDNKENMREFFQSELEKIYNFAKQIHSGNIKSSNGKKFKNVVQIGIGGSSLGPKALYSSIKNYAKKHNLALMNGYFISNIDPDESEEVLSSINVDETLFIIVSKSGNTLETKANMQFLINKLKLNGIKEYKKQMVIITLKDSMLAIEEKGYLEYFFMHDSIGGRFSPTSAVGLTLLTLCFTEKVAKEILKGANEADKKSLNKNVKDNASLLAALISIYERNVLNYSSNCIIAYSKAMENFYLHLQQLEMESNGKSVNRFNETINYKTVRIIWGGIGTDVQHSFFQMLHQGTDIVPMDFIGFNETQLKEDVISDNSSSNDKLKANLIAQIIAFSKGKENSNKNKNFQGERPSALIYSKELTPYAIGAILSHYENKVMFEGFLLNINSFDQEGVQLGKIIANQILKNDNFKDEVIESYSKKILKKF</sequence>
<comment type="function">
    <text evidence="1">Catalyzes the reversible isomerization of glucose-6-phosphate to fructose-6-phosphate.</text>
</comment>
<comment type="catalytic activity">
    <reaction evidence="1">
        <text>alpha-D-glucose 6-phosphate = beta-D-fructose 6-phosphate</text>
        <dbReference type="Rhea" id="RHEA:11816"/>
        <dbReference type="ChEBI" id="CHEBI:57634"/>
        <dbReference type="ChEBI" id="CHEBI:58225"/>
        <dbReference type="EC" id="5.3.1.9"/>
    </reaction>
</comment>
<comment type="pathway">
    <text evidence="1">Carbohydrate biosynthesis; gluconeogenesis.</text>
</comment>
<comment type="pathway">
    <text evidence="1">Carbohydrate degradation; glycolysis; D-glyceraldehyde 3-phosphate and glycerone phosphate from D-glucose: step 2/4.</text>
</comment>
<comment type="subcellular location">
    <subcellularLocation>
        <location evidence="1">Cytoplasm</location>
    </subcellularLocation>
</comment>
<comment type="similarity">
    <text evidence="1">Belongs to the GPI family.</text>
</comment>
<dbReference type="EC" id="5.3.1.9" evidence="1"/>
<dbReference type="EMBL" id="CP001205">
    <property type="protein sequence ID" value="ACK74544.1"/>
    <property type="molecule type" value="Genomic_DNA"/>
</dbReference>
<dbReference type="RefSeq" id="WP_002660427.1">
    <property type="nucleotide sequence ID" value="NC_011728.1"/>
</dbReference>
<dbReference type="SMR" id="B7J0H6"/>
<dbReference type="KEGG" id="bbz:BbuZS7_0755"/>
<dbReference type="HOGENOM" id="CLU_017947_3_1_12"/>
<dbReference type="UniPathway" id="UPA00109">
    <property type="reaction ID" value="UER00181"/>
</dbReference>
<dbReference type="UniPathway" id="UPA00138"/>
<dbReference type="Proteomes" id="UP000006901">
    <property type="component" value="Chromosome"/>
</dbReference>
<dbReference type="GO" id="GO:0005829">
    <property type="term" value="C:cytosol"/>
    <property type="evidence" value="ECO:0007669"/>
    <property type="project" value="TreeGrafter"/>
</dbReference>
<dbReference type="GO" id="GO:0097367">
    <property type="term" value="F:carbohydrate derivative binding"/>
    <property type="evidence" value="ECO:0007669"/>
    <property type="project" value="InterPro"/>
</dbReference>
<dbReference type="GO" id="GO:0004347">
    <property type="term" value="F:glucose-6-phosphate isomerase activity"/>
    <property type="evidence" value="ECO:0007669"/>
    <property type="project" value="UniProtKB-UniRule"/>
</dbReference>
<dbReference type="GO" id="GO:0048029">
    <property type="term" value="F:monosaccharide binding"/>
    <property type="evidence" value="ECO:0007669"/>
    <property type="project" value="TreeGrafter"/>
</dbReference>
<dbReference type="GO" id="GO:0006094">
    <property type="term" value="P:gluconeogenesis"/>
    <property type="evidence" value="ECO:0007669"/>
    <property type="project" value="UniProtKB-UniRule"/>
</dbReference>
<dbReference type="GO" id="GO:0051156">
    <property type="term" value="P:glucose 6-phosphate metabolic process"/>
    <property type="evidence" value="ECO:0007669"/>
    <property type="project" value="TreeGrafter"/>
</dbReference>
<dbReference type="GO" id="GO:0006096">
    <property type="term" value="P:glycolytic process"/>
    <property type="evidence" value="ECO:0007669"/>
    <property type="project" value="UniProtKB-UniRule"/>
</dbReference>
<dbReference type="CDD" id="cd05015">
    <property type="entry name" value="SIS_PGI_1"/>
    <property type="match status" value="1"/>
</dbReference>
<dbReference type="CDD" id="cd05016">
    <property type="entry name" value="SIS_PGI_2"/>
    <property type="match status" value="1"/>
</dbReference>
<dbReference type="FunFam" id="3.40.50.10490:FF:000086">
    <property type="entry name" value="Glucose-6-phosphate isomerase"/>
    <property type="match status" value="1"/>
</dbReference>
<dbReference type="Gene3D" id="1.10.1390.10">
    <property type="match status" value="1"/>
</dbReference>
<dbReference type="Gene3D" id="3.40.50.10490">
    <property type="entry name" value="Glucose-6-phosphate isomerase like protein, domain 1"/>
    <property type="match status" value="2"/>
</dbReference>
<dbReference type="HAMAP" id="MF_00473">
    <property type="entry name" value="G6P_isomerase"/>
    <property type="match status" value="1"/>
</dbReference>
<dbReference type="InterPro" id="IPR001672">
    <property type="entry name" value="G6P_Isomerase"/>
</dbReference>
<dbReference type="InterPro" id="IPR023096">
    <property type="entry name" value="G6P_Isomerase_C"/>
</dbReference>
<dbReference type="InterPro" id="IPR018189">
    <property type="entry name" value="Phosphoglucose_isomerase_CS"/>
</dbReference>
<dbReference type="InterPro" id="IPR046348">
    <property type="entry name" value="SIS_dom_sf"/>
</dbReference>
<dbReference type="InterPro" id="IPR035476">
    <property type="entry name" value="SIS_PGI_1"/>
</dbReference>
<dbReference type="InterPro" id="IPR035482">
    <property type="entry name" value="SIS_PGI_2"/>
</dbReference>
<dbReference type="NCBIfam" id="NF010695">
    <property type="entry name" value="PRK14095.1"/>
    <property type="match status" value="1"/>
</dbReference>
<dbReference type="PANTHER" id="PTHR11469">
    <property type="entry name" value="GLUCOSE-6-PHOSPHATE ISOMERASE"/>
    <property type="match status" value="1"/>
</dbReference>
<dbReference type="PANTHER" id="PTHR11469:SF1">
    <property type="entry name" value="GLUCOSE-6-PHOSPHATE ISOMERASE"/>
    <property type="match status" value="1"/>
</dbReference>
<dbReference type="Pfam" id="PF00342">
    <property type="entry name" value="PGI"/>
    <property type="match status" value="1"/>
</dbReference>
<dbReference type="PRINTS" id="PR00662">
    <property type="entry name" value="G6PISOMERASE"/>
</dbReference>
<dbReference type="SUPFAM" id="SSF53697">
    <property type="entry name" value="SIS domain"/>
    <property type="match status" value="1"/>
</dbReference>
<dbReference type="PROSITE" id="PS00765">
    <property type="entry name" value="P_GLUCOSE_ISOMERASE_1"/>
    <property type="match status" value="1"/>
</dbReference>
<dbReference type="PROSITE" id="PS00174">
    <property type="entry name" value="P_GLUCOSE_ISOMERASE_2"/>
    <property type="match status" value="1"/>
</dbReference>
<dbReference type="PROSITE" id="PS51463">
    <property type="entry name" value="P_GLUCOSE_ISOMERASE_3"/>
    <property type="match status" value="1"/>
</dbReference>
<gene>
    <name evidence="1" type="primary">pgi</name>
    <name type="ordered locus">BbuZS7_0755</name>
</gene>
<feature type="chain" id="PRO_1000125696" description="Glucose-6-phosphate isomerase">
    <location>
        <begin position="1"/>
        <end position="530"/>
    </location>
</feature>
<feature type="active site" description="Proton donor" evidence="1">
    <location>
        <position position="356"/>
    </location>
</feature>
<feature type="active site" evidence="1">
    <location>
        <position position="387"/>
    </location>
</feature>
<feature type="active site" evidence="1">
    <location>
        <position position="502"/>
    </location>
</feature>
<protein>
    <recommendedName>
        <fullName evidence="1">Glucose-6-phosphate isomerase</fullName>
        <shortName evidence="1">GPI</shortName>
        <ecNumber evidence="1">5.3.1.9</ecNumber>
    </recommendedName>
    <alternativeName>
        <fullName evidence="1">Phosphoglucose isomerase</fullName>
        <shortName evidence="1">PGI</shortName>
    </alternativeName>
    <alternativeName>
        <fullName evidence="1">Phosphohexose isomerase</fullName>
        <shortName evidence="1">PHI</shortName>
    </alternativeName>
</protein>
<organism>
    <name type="scientific">Borreliella burgdorferi (strain ZS7)</name>
    <name type="common">Borrelia burgdorferi</name>
    <dbReference type="NCBI Taxonomy" id="445985"/>
    <lineage>
        <taxon>Bacteria</taxon>
        <taxon>Pseudomonadati</taxon>
        <taxon>Spirochaetota</taxon>
        <taxon>Spirochaetia</taxon>
        <taxon>Spirochaetales</taxon>
        <taxon>Borreliaceae</taxon>
        <taxon>Borreliella</taxon>
    </lineage>
</organism>